<proteinExistence type="evidence at protein level"/>
<evidence type="ECO:0000250" key="1">
    <source>
        <dbReference type="UniProtKB" id="Q9Y2Y9"/>
    </source>
</evidence>
<evidence type="ECO:0000255" key="2">
    <source>
        <dbReference type="PROSITE-ProRule" id="PRU00042"/>
    </source>
</evidence>
<evidence type="ECO:0000256" key="3">
    <source>
        <dbReference type="SAM" id="MobiDB-lite"/>
    </source>
</evidence>
<evidence type="ECO:0000269" key="4">
    <source>
    </source>
</evidence>
<evidence type="ECO:0000269" key="5">
    <source>
    </source>
</evidence>
<evidence type="ECO:0000305" key="6"/>
<evidence type="ECO:0007744" key="7">
    <source>
    </source>
</evidence>
<reference key="1">
    <citation type="journal article" date="2000" name="Biochem. J.">
        <title>Mouse BTEB3, a new member of the basic transcription element binding protein (BTEB) family, activates expression from GC-rich minimal promoter regions.</title>
        <authorList>
            <person name="Martin K.M."/>
            <person name="Cooper W.N."/>
            <person name="Metcalfe J.C."/>
            <person name="Kemp P.R."/>
        </authorList>
    </citation>
    <scope>NUCLEOTIDE SEQUENCE [MRNA]</scope>
    <scope>FUNCTION</scope>
    <source>
        <tissue>Heart</tissue>
    </source>
</reference>
<reference key="2">
    <citation type="journal article" date="2000" name="Blood">
        <title>FKLF-2: a novel Kruppel-like transcriptional factor that activates globin and other erythroid lineage genes.</title>
        <authorList>
            <person name="Asano H."/>
            <person name="Li X.S."/>
            <person name="Stamatoyannopoulos G."/>
        </authorList>
    </citation>
    <scope>NUCLEOTIDE SEQUENCE [MRNA]</scope>
    <scope>FUNCTION</scope>
    <source>
        <strain>B6D2F2</strain>
        <tissue>Yolk</tissue>
    </source>
</reference>
<reference key="3">
    <citation type="journal article" date="2000" name="Genomics">
        <title>Identification of KLF13 and KLF14 (SP6), novel members of the SP/XKLF transcription factor family.</title>
        <authorList>
            <person name="Scohy S."/>
            <person name="Gabant P."/>
            <person name="Van Reeth T."/>
            <person name="Hertveldt V."/>
            <person name="Dreze P.-L."/>
            <person name="Van Vooren P."/>
            <person name="Riviere M."/>
            <person name="Szpirer J."/>
            <person name="Szpirer C."/>
        </authorList>
    </citation>
    <scope>NUCLEOTIDE SEQUENCE [MRNA]</scope>
    <source>
        <tissue>Fetal liver</tissue>
    </source>
</reference>
<reference key="4">
    <citation type="submission" date="2000-04" db="EMBL/GenBank/DDBJ databases">
        <title>Identification of Mus musculus cDNA for RANTES factor of late activated T lymphocytes-1.</title>
        <authorList>
            <person name="Song A."/>
            <person name="Thamatrakoln K."/>
            <person name="Krensky A.M."/>
        </authorList>
    </citation>
    <scope>NUCLEOTIDE SEQUENCE [MRNA]</scope>
    <source>
        <strain>BALB/cJ</strain>
    </source>
</reference>
<reference key="5">
    <citation type="journal article" date="2010" name="Cell">
        <title>A tissue-specific atlas of mouse protein phosphorylation and expression.</title>
        <authorList>
            <person name="Huttlin E.L."/>
            <person name="Jedrychowski M.P."/>
            <person name="Elias J.E."/>
            <person name="Goswami T."/>
            <person name="Rad R."/>
            <person name="Beausoleil S.A."/>
            <person name="Villen J."/>
            <person name="Haas W."/>
            <person name="Sowa M.E."/>
            <person name="Gygi S.P."/>
        </authorList>
    </citation>
    <scope>PHOSPHORYLATION [LARGE SCALE ANALYSIS] AT SER-280; SER-284 AND SER-288</scope>
    <scope>IDENTIFICATION BY MASS SPECTROMETRY [LARGE SCALE ANALYSIS]</scope>
    <source>
        <tissue>Kidney</tissue>
        <tissue>Lung</tissue>
        <tissue>Spleen</tissue>
    </source>
</reference>
<dbReference type="EMBL" id="AJ245644">
    <property type="protein sequence ID" value="CAB75887.1"/>
    <property type="molecule type" value="mRNA"/>
</dbReference>
<dbReference type="EMBL" id="AF251796">
    <property type="protein sequence ID" value="AAF73964.1"/>
    <property type="molecule type" value="mRNA"/>
</dbReference>
<dbReference type="EMBL" id="AJ275987">
    <property type="protein sequence ID" value="CAC06697.1"/>
    <property type="molecule type" value="mRNA"/>
</dbReference>
<dbReference type="EMBL" id="AF252285">
    <property type="protein sequence ID" value="AAF65826.1"/>
    <property type="molecule type" value="mRNA"/>
</dbReference>
<dbReference type="CCDS" id="CCDS21331.1"/>
<dbReference type="RefSeq" id="NP_067341.2">
    <property type="nucleotide sequence ID" value="NM_021366.3"/>
</dbReference>
<dbReference type="SMR" id="Q9JJZ6"/>
<dbReference type="BioGRID" id="206125">
    <property type="interactions" value="3"/>
</dbReference>
<dbReference type="FunCoup" id="Q9JJZ6">
    <property type="interactions" value="97"/>
</dbReference>
<dbReference type="IntAct" id="Q9JJZ6">
    <property type="interactions" value="2"/>
</dbReference>
<dbReference type="MINT" id="Q9JJZ6"/>
<dbReference type="STRING" id="10090.ENSMUSP00000067680"/>
<dbReference type="iPTMnet" id="Q9JJZ6"/>
<dbReference type="PhosphoSitePlus" id="Q9JJZ6"/>
<dbReference type="jPOST" id="Q9JJZ6"/>
<dbReference type="PaxDb" id="10090-ENSMUSP00000067680"/>
<dbReference type="PeptideAtlas" id="Q9JJZ6"/>
<dbReference type="ProteomicsDB" id="264767"/>
<dbReference type="Pumba" id="Q9JJZ6"/>
<dbReference type="Antibodypedia" id="9456">
    <property type="antibodies" value="176 antibodies from 32 providers"/>
</dbReference>
<dbReference type="DNASU" id="50794"/>
<dbReference type="Ensembl" id="ENSMUST00000063694.10">
    <property type="protein sequence ID" value="ENSMUSP00000067680.8"/>
    <property type="gene ID" value="ENSMUSG00000052040.11"/>
</dbReference>
<dbReference type="GeneID" id="50794"/>
<dbReference type="KEGG" id="mmu:50794"/>
<dbReference type="UCSC" id="uc009hfn.2">
    <property type="organism name" value="mouse"/>
</dbReference>
<dbReference type="AGR" id="MGI:1354948"/>
<dbReference type="CTD" id="51621"/>
<dbReference type="MGI" id="MGI:1354948">
    <property type="gene designation" value="Klf13"/>
</dbReference>
<dbReference type="VEuPathDB" id="HostDB:ENSMUSG00000052040"/>
<dbReference type="eggNOG" id="KOG1721">
    <property type="taxonomic scope" value="Eukaryota"/>
</dbReference>
<dbReference type="GeneTree" id="ENSGT00940000161911"/>
<dbReference type="HOGENOM" id="CLU_002678_33_2_1"/>
<dbReference type="InParanoid" id="Q9JJZ6"/>
<dbReference type="OMA" id="KHRCHYA"/>
<dbReference type="OrthoDB" id="6365676at2759"/>
<dbReference type="PhylomeDB" id="Q9JJZ6"/>
<dbReference type="TreeFam" id="TF351003"/>
<dbReference type="BioGRID-ORCS" id="50794">
    <property type="hits" value="5 hits in 79 CRISPR screens"/>
</dbReference>
<dbReference type="ChiTaRS" id="Klf13">
    <property type="organism name" value="mouse"/>
</dbReference>
<dbReference type="PRO" id="PR:Q9JJZ6"/>
<dbReference type="Proteomes" id="UP000000589">
    <property type="component" value="Chromosome 7"/>
</dbReference>
<dbReference type="RNAct" id="Q9JJZ6">
    <property type="molecule type" value="protein"/>
</dbReference>
<dbReference type="Bgee" id="ENSMUSG00000052040">
    <property type="expression patterns" value="Expressed in rostral migratory stream and 270 other cell types or tissues"/>
</dbReference>
<dbReference type="ExpressionAtlas" id="Q9JJZ6">
    <property type="expression patterns" value="baseline and differential"/>
</dbReference>
<dbReference type="GO" id="GO:0005634">
    <property type="term" value="C:nucleus"/>
    <property type="evidence" value="ECO:0007669"/>
    <property type="project" value="UniProtKB-SubCell"/>
</dbReference>
<dbReference type="GO" id="GO:0003677">
    <property type="term" value="F:DNA binding"/>
    <property type="evidence" value="ECO:0000314"/>
    <property type="project" value="MGI"/>
</dbReference>
<dbReference type="GO" id="GO:0001228">
    <property type="term" value="F:DNA-binding transcription activator activity, RNA polymerase II-specific"/>
    <property type="evidence" value="ECO:0000314"/>
    <property type="project" value="NTNU_SB"/>
</dbReference>
<dbReference type="GO" id="GO:0000978">
    <property type="term" value="F:RNA polymerase II cis-regulatory region sequence-specific DNA binding"/>
    <property type="evidence" value="ECO:0000314"/>
    <property type="project" value="NTNU_SB"/>
</dbReference>
<dbReference type="GO" id="GO:0008270">
    <property type="term" value="F:zinc ion binding"/>
    <property type="evidence" value="ECO:0007669"/>
    <property type="project" value="UniProtKB-KW"/>
</dbReference>
<dbReference type="GO" id="GO:0008285">
    <property type="term" value="P:negative regulation of cell population proliferation"/>
    <property type="evidence" value="ECO:0000315"/>
    <property type="project" value="BHF-UCL"/>
</dbReference>
<dbReference type="GO" id="GO:0045647">
    <property type="term" value="P:negative regulation of erythrocyte differentiation"/>
    <property type="evidence" value="ECO:0000315"/>
    <property type="project" value="BHF-UCL"/>
</dbReference>
<dbReference type="GO" id="GO:0045944">
    <property type="term" value="P:positive regulation of transcription by RNA polymerase II"/>
    <property type="evidence" value="ECO:0000314"/>
    <property type="project" value="MGI"/>
</dbReference>
<dbReference type="GO" id="GO:0006357">
    <property type="term" value="P:regulation of transcription by RNA polymerase II"/>
    <property type="evidence" value="ECO:0000314"/>
    <property type="project" value="MGI"/>
</dbReference>
<dbReference type="GO" id="GO:0006366">
    <property type="term" value="P:transcription by RNA polymerase II"/>
    <property type="evidence" value="ECO:0000250"/>
    <property type="project" value="MGI"/>
</dbReference>
<dbReference type="CDD" id="cd21571">
    <property type="entry name" value="KLF13_N"/>
    <property type="match status" value="1"/>
</dbReference>
<dbReference type="FunFam" id="3.30.160.60:FF:000018">
    <property type="entry name" value="Krueppel-like factor 15"/>
    <property type="match status" value="1"/>
</dbReference>
<dbReference type="FunFam" id="3.30.160.60:FF:000232">
    <property type="entry name" value="Krueppel-like factor 9"/>
    <property type="match status" value="1"/>
</dbReference>
<dbReference type="FunFam" id="3.30.160.60:FF:000521">
    <property type="entry name" value="Krueppel-like factor 9"/>
    <property type="match status" value="1"/>
</dbReference>
<dbReference type="Gene3D" id="3.30.160.60">
    <property type="entry name" value="Classic Zinc Finger"/>
    <property type="match status" value="3"/>
</dbReference>
<dbReference type="InterPro" id="IPR036236">
    <property type="entry name" value="Znf_C2H2_sf"/>
</dbReference>
<dbReference type="InterPro" id="IPR013087">
    <property type="entry name" value="Znf_C2H2_type"/>
</dbReference>
<dbReference type="PANTHER" id="PTHR23235:SF21">
    <property type="entry name" value="KRUEPPEL-LIKE FACTOR 13"/>
    <property type="match status" value="1"/>
</dbReference>
<dbReference type="PANTHER" id="PTHR23235">
    <property type="entry name" value="KRUEPPEL-LIKE TRANSCRIPTION FACTOR"/>
    <property type="match status" value="1"/>
</dbReference>
<dbReference type="Pfam" id="PF00096">
    <property type="entry name" value="zf-C2H2"/>
    <property type="match status" value="3"/>
</dbReference>
<dbReference type="SMART" id="SM00355">
    <property type="entry name" value="ZnF_C2H2"/>
    <property type="match status" value="3"/>
</dbReference>
<dbReference type="SUPFAM" id="SSF57667">
    <property type="entry name" value="beta-beta-alpha zinc fingers"/>
    <property type="match status" value="1"/>
</dbReference>
<dbReference type="PROSITE" id="PS00028">
    <property type="entry name" value="ZINC_FINGER_C2H2_1"/>
    <property type="match status" value="3"/>
</dbReference>
<dbReference type="PROSITE" id="PS50157">
    <property type="entry name" value="ZINC_FINGER_C2H2_2"/>
    <property type="match status" value="3"/>
</dbReference>
<gene>
    <name type="primary">Klf13</name>
    <name type="synonym">Bteb3</name>
    <name type="synonym">Fklf2</name>
</gene>
<sequence length="289" mass="31136">MAAAAYVDHFAAECLVSMSSRAVVHEPREGPEPRPEGAAAAAPTLPRVDERRDGKDSASLFVVARILADLNQQAPAPAPAERREGAAARKARTPCRLPPAPPAPPPGPEPASPGQAGAPAAPPSPAWSEPEAALEQEPGPAGSGEPGLRQRGRRGRSRADLESPQRKHKCHYAGCEKVYGKSSHLKAHLRTHTGERPFACSWQECNKKFARSDELARHYRTHTGEKKFSCPICEKRFMRSDHLTKHARRHANFHPGMLQRRGGGSRTGSLSDYSRSDASSPTISPASSP</sequence>
<name>KLF13_MOUSE</name>
<keyword id="KW-0010">Activator</keyword>
<keyword id="KW-0238">DNA-binding</keyword>
<keyword id="KW-0479">Metal-binding</keyword>
<keyword id="KW-0539">Nucleus</keyword>
<keyword id="KW-0597">Phosphoprotein</keyword>
<keyword id="KW-1185">Reference proteome</keyword>
<keyword id="KW-0677">Repeat</keyword>
<keyword id="KW-0804">Transcription</keyword>
<keyword id="KW-0805">Transcription regulation</keyword>
<keyword id="KW-0862">Zinc</keyword>
<keyword id="KW-0863">Zinc-finger</keyword>
<accession>Q9JJZ6</accession>
<accession>Q9ESX3</accession>
<accession>Q9JHF8</accession>
<protein>
    <recommendedName>
        <fullName>Krueppel-like factor 13</fullName>
    </recommendedName>
    <alternativeName>
        <fullName>Basic transcription element-binding protein 3</fullName>
        <shortName>BTE-binding protein 3</shortName>
    </alternativeName>
    <alternativeName>
        <fullName>Erythroid transcription factor FKLF-2</fullName>
    </alternativeName>
    <alternativeName>
        <fullName>RANTES factor of late activated T-lymphocytes 1</fullName>
        <shortName>RFLAT-1</shortName>
    </alternativeName>
    <alternativeName>
        <fullName>Transcription factor BTEB3</fullName>
    </alternativeName>
</protein>
<feature type="chain" id="PRO_0000047185" description="Krueppel-like factor 13">
    <location>
        <begin position="1"/>
        <end position="289"/>
    </location>
</feature>
<feature type="zinc finger region" description="C2H2-type 1" evidence="2">
    <location>
        <begin position="168"/>
        <end position="192"/>
    </location>
</feature>
<feature type="zinc finger region" description="C2H2-type 2" evidence="2">
    <location>
        <begin position="198"/>
        <end position="222"/>
    </location>
</feature>
<feature type="zinc finger region" description="C2H2-type 3" evidence="2">
    <location>
        <begin position="228"/>
        <end position="250"/>
    </location>
</feature>
<feature type="region of interest" description="Disordered" evidence="3">
    <location>
        <begin position="23"/>
        <end position="54"/>
    </location>
</feature>
<feature type="region of interest" description="Disordered" evidence="3">
    <location>
        <begin position="70"/>
        <end position="168"/>
    </location>
</feature>
<feature type="region of interest" description="Disordered" evidence="3">
    <location>
        <begin position="250"/>
        <end position="289"/>
    </location>
</feature>
<feature type="compositionally biased region" description="Basic and acidic residues" evidence="3">
    <location>
        <begin position="23"/>
        <end position="35"/>
    </location>
</feature>
<feature type="compositionally biased region" description="Pro residues" evidence="3">
    <location>
        <begin position="96"/>
        <end position="111"/>
    </location>
</feature>
<feature type="compositionally biased region" description="Low complexity" evidence="3">
    <location>
        <begin position="267"/>
        <end position="289"/>
    </location>
</feature>
<feature type="modified residue" description="Phosphoserine" evidence="1">
    <location>
        <position position="269"/>
    </location>
</feature>
<feature type="modified residue" description="Phosphoserine" evidence="1">
    <location>
        <position position="271"/>
    </location>
</feature>
<feature type="modified residue" description="Phosphoserine" evidence="7">
    <location>
        <position position="280"/>
    </location>
</feature>
<feature type="modified residue" description="Phosphoserine" evidence="7">
    <location>
        <position position="284"/>
    </location>
</feature>
<feature type="modified residue" description="Phosphoserine" evidence="7">
    <location>
        <position position="288"/>
    </location>
</feature>
<feature type="sequence conflict" description="In Ref. 3; CAC06697." evidence="6" ref="3">
    <original>ECLVSMSSRAVVHEPREG</original>
    <variation>SASCPCQPRSRARAAGR</variation>
    <location>
        <begin position="13"/>
        <end position="30"/>
    </location>
</feature>
<feature type="sequence conflict" description="In Ref. 1; CAB75887." evidence="6" ref="1">
    <original>E</original>
    <variation>R</variation>
    <location>
        <position position="32"/>
    </location>
</feature>
<feature type="sequence conflict" description="In Ref. 1; CAB75887." evidence="6" ref="1">
    <original>P</original>
    <variation>L</variation>
    <location>
        <position position="43"/>
    </location>
</feature>
<organism>
    <name type="scientific">Mus musculus</name>
    <name type="common">Mouse</name>
    <dbReference type="NCBI Taxonomy" id="10090"/>
    <lineage>
        <taxon>Eukaryota</taxon>
        <taxon>Metazoa</taxon>
        <taxon>Chordata</taxon>
        <taxon>Craniata</taxon>
        <taxon>Vertebrata</taxon>
        <taxon>Euteleostomi</taxon>
        <taxon>Mammalia</taxon>
        <taxon>Eutheria</taxon>
        <taxon>Euarchontoglires</taxon>
        <taxon>Glires</taxon>
        <taxon>Rodentia</taxon>
        <taxon>Myomorpha</taxon>
        <taxon>Muroidea</taxon>
        <taxon>Muridae</taxon>
        <taxon>Murinae</taxon>
        <taxon>Mus</taxon>
        <taxon>Mus</taxon>
    </lineage>
</organism>
<comment type="function">
    <text evidence="1 4 5">Transcription factor that activates expression from GC-rich minimal promoter regions, including genes in the cells of the erythroid lineage (PubMed:10642511, PubMed:10828046). Represses transcription by binding to the BTE site, a GC-rich DNA element, in competition with the activator SP1. It also represses transcription by interacting with the corepressor Sin3A and HDAC1. Activates RANTES and CCL5 expression in T-cells (By similarity).</text>
</comment>
<comment type="interaction">
    <interactant intactId="EBI-8407880">
        <id>Q9JJZ6</id>
    </interactant>
    <interactant intactId="EBI-8411807">
        <id>P70326</id>
        <label>Tbx5</label>
    </interactant>
    <organismsDiffer>false</organismsDiffer>
    <experiments>3</experiments>
</comment>
<comment type="subcellular location">
    <subcellularLocation>
        <location evidence="1">Nucleus</location>
    </subcellularLocation>
</comment>
<comment type="tissue specificity">
    <text>Ubiquitous.</text>
</comment>
<comment type="PTM">
    <text evidence="1">Phosphorylated by PRP4K; phosphorylation regulates its transcriptional modulator activity.</text>
</comment>
<comment type="similarity">
    <text evidence="6">Belongs to the Sp1 C2H2-type zinc-finger protein family.</text>
</comment>